<comment type="function">
    <text>The primary product of this enzyme is 4,2',4',6'-tetrahydroxychalcone (also termed naringenin-chalcone or chalcone) which can under specific conditions spontaneously isomerize into naringenin.</text>
</comment>
<comment type="catalytic activity">
    <reaction evidence="1">
        <text>(E)-4-coumaroyl-CoA + 3 malonyl-CoA + 3 H(+) = 2',4,4',6'-tetrahydroxychalcone + 3 CO2 + 4 CoA</text>
        <dbReference type="Rhea" id="RHEA:11128"/>
        <dbReference type="ChEBI" id="CHEBI:15378"/>
        <dbReference type="ChEBI" id="CHEBI:15413"/>
        <dbReference type="ChEBI" id="CHEBI:16526"/>
        <dbReference type="ChEBI" id="CHEBI:57287"/>
        <dbReference type="ChEBI" id="CHEBI:57384"/>
        <dbReference type="ChEBI" id="CHEBI:85008"/>
        <dbReference type="EC" id="2.3.1.74"/>
    </reaction>
</comment>
<comment type="pathway">
    <text>Secondary metabolite biosynthesis; flavonoid biosynthesis.</text>
</comment>
<comment type="similarity">
    <text evidence="2">Belongs to the thiolase-like superfamily. Chalcone/stilbene synthases family.</text>
</comment>
<name>CHS3_PEA</name>
<reference key="1">
    <citation type="journal article" date="1997" name="Mol. Gen. Genet.">
        <title>Molecular evolution and functional relevance of the chalcone synthase genes of pea.</title>
        <authorList>
            <person name="Ito M."/>
            <person name="Ichinose Y."/>
            <person name="Kato H."/>
            <person name="Shiraishi T."/>
            <person name="Yamada T."/>
        </authorList>
    </citation>
    <scope>NUCLEOTIDE SEQUENCE [GENOMIC DNA]</scope>
    <source>
        <strain>cv. Midoriusui</strain>
    </source>
</reference>
<accession>O23883</accession>
<organism>
    <name type="scientific">Pisum sativum</name>
    <name type="common">Garden pea</name>
    <name type="synonym">Lathyrus oleraceus</name>
    <dbReference type="NCBI Taxonomy" id="3888"/>
    <lineage>
        <taxon>Eukaryota</taxon>
        <taxon>Viridiplantae</taxon>
        <taxon>Streptophyta</taxon>
        <taxon>Embryophyta</taxon>
        <taxon>Tracheophyta</taxon>
        <taxon>Spermatophyta</taxon>
        <taxon>Magnoliopsida</taxon>
        <taxon>eudicotyledons</taxon>
        <taxon>Gunneridae</taxon>
        <taxon>Pentapetalae</taxon>
        <taxon>rosids</taxon>
        <taxon>fabids</taxon>
        <taxon>Fabales</taxon>
        <taxon>Fabaceae</taxon>
        <taxon>Papilionoideae</taxon>
        <taxon>50 kb inversion clade</taxon>
        <taxon>NPAAA clade</taxon>
        <taxon>Hologalegina</taxon>
        <taxon>IRL clade</taxon>
        <taxon>Fabeae</taxon>
        <taxon>Pisum</taxon>
    </lineage>
</organism>
<keyword id="KW-0012">Acyltransferase</keyword>
<keyword id="KW-0284">Flavonoid biosynthesis</keyword>
<keyword id="KW-0808">Transferase</keyword>
<feature type="chain" id="PRO_0000216020" description="Chalcone synthase 3">
    <location>
        <begin position="1"/>
        <end position="389"/>
    </location>
</feature>
<feature type="active site" evidence="1">
    <location>
        <position position="164"/>
    </location>
</feature>
<protein>
    <recommendedName>
        <fullName>Chalcone synthase 3</fullName>
        <ecNumber>2.3.1.74</ecNumber>
    </recommendedName>
    <alternativeName>
        <fullName>Naregenin-chalcone synthase 3</fullName>
    </alternativeName>
</protein>
<gene>
    <name type="primary">CHS3</name>
</gene>
<proteinExistence type="inferred from homology"/>
<evidence type="ECO:0000255" key="1">
    <source>
        <dbReference type="PROSITE-ProRule" id="PRU10023"/>
    </source>
</evidence>
<evidence type="ECO:0000305" key="2"/>
<dbReference type="EC" id="2.3.1.74"/>
<dbReference type="EMBL" id="D88261">
    <property type="protein sequence ID" value="BAA22043.1"/>
    <property type="molecule type" value="Genomic_DNA"/>
</dbReference>
<dbReference type="SMR" id="O23883"/>
<dbReference type="OrthoDB" id="1854138at2759"/>
<dbReference type="UniPathway" id="UPA00154"/>
<dbReference type="GO" id="GO:0016210">
    <property type="term" value="F:naringenin-chalcone synthase activity"/>
    <property type="evidence" value="ECO:0007669"/>
    <property type="project" value="UniProtKB-EC"/>
</dbReference>
<dbReference type="GO" id="GO:0009813">
    <property type="term" value="P:flavonoid biosynthetic process"/>
    <property type="evidence" value="ECO:0007669"/>
    <property type="project" value="UniProtKB-UniPathway"/>
</dbReference>
<dbReference type="GO" id="GO:0030639">
    <property type="term" value="P:polyketide biosynthetic process"/>
    <property type="evidence" value="ECO:0007669"/>
    <property type="project" value="TreeGrafter"/>
</dbReference>
<dbReference type="CDD" id="cd00831">
    <property type="entry name" value="CHS_like"/>
    <property type="match status" value="1"/>
</dbReference>
<dbReference type="FunFam" id="3.40.47.10:FF:000014">
    <property type="entry name" value="Chalcone synthase 1"/>
    <property type="match status" value="1"/>
</dbReference>
<dbReference type="FunFam" id="3.40.47.10:FF:000025">
    <property type="entry name" value="Chalcone synthase 2"/>
    <property type="match status" value="1"/>
</dbReference>
<dbReference type="Gene3D" id="3.40.47.10">
    <property type="match status" value="2"/>
</dbReference>
<dbReference type="InterPro" id="IPR012328">
    <property type="entry name" value="Chalcone/stilbene_synt_C"/>
</dbReference>
<dbReference type="InterPro" id="IPR001099">
    <property type="entry name" value="Chalcone/stilbene_synt_N"/>
</dbReference>
<dbReference type="InterPro" id="IPR018088">
    <property type="entry name" value="Chalcone/stilbene_synthase_AS"/>
</dbReference>
<dbReference type="InterPro" id="IPR011141">
    <property type="entry name" value="Polyketide_synthase_type-III"/>
</dbReference>
<dbReference type="InterPro" id="IPR016039">
    <property type="entry name" value="Thiolase-like"/>
</dbReference>
<dbReference type="PANTHER" id="PTHR11877:SF62">
    <property type="entry name" value="CHALCONE SYNTHASE 7"/>
    <property type="match status" value="1"/>
</dbReference>
<dbReference type="PANTHER" id="PTHR11877">
    <property type="entry name" value="HYDROXYMETHYLGLUTARYL-COA SYNTHASE"/>
    <property type="match status" value="1"/>
</dbReference>
<dbReference type="Pfam" id="PF02797">
    <property type="entry name" value="Chal_sti_synt_C"/>
    <property type="match status" value="1"/>
</dbReference>
<dbReference type="Pfam" id="PF00195">
    <property type="entry name" value="Chal_sti_synt_N"/>
    <property type="match status" value="1"/>
</dbReference>
<dbReference type="PIRSF" id="PIRSF000451">
    <property type="entry name" value="PKS_III"/>
    <property type="match status" value="1"/>
</dbReference>
<dbReference type="SUPFAM" id="SSF53901">
    <property type="entry name" value="Thiolase-like"/>
    <property type="match status" value="2"/>
</dbReference>
<dbReference type="PROSITE" id="PS00441">
    <property type="entry name" value="CHALCONE_SYNTH"/>
    <property type="match status" value="1"/>
</dbReference>
<sequence length="389" mass="42802">MVSVSEIRKAQRAEGPATILAIGTANPANCVEQSTYPDFYFRITNSEHKTELKQKFQRMCDKSMINRRYMYLTEEILKENPSVCEYMAPSLDARQDMVVVEVPRLGKEAAVKAIKEWGQPKSKITHLIFCTTSGVDMPGADYQLTKLLGLRPYVKRYMMYQQGCFAGGTVLRLAKDLAENNKGARVLVVCSEVTAVTFRGPSDTHLDSLVGQALFGDGAAALIVGSDPLPEIENPIFEMVWTAQTIAPDSEGAIDGHLREAGLTFHLLKDVPAIVSKNIDKALVEAFQPLGISDYNSIFWIAHPGGPAILDQVEQKLALKPEKMKATREVLSEYGNMSSACVLFILDEMRRKSIQNGLKTTGEGLEWGVLFGFGPGLTIETVVLHSVAI</sequence>